<evidence type="ECO:0000255" key="1">
    <source>
        <dbReference type="HAMAP-Rule" id="MF_01367"/>
    </source>
</evidence>
<evidence type="ECO:0000305" key="2"/>
<accession>Q0W1X8</accession>
<organism>
    <name type="scientific">Methanocella arvoryzae (strain DSM 22066 / NBRC 105507 / MRE50)</name>
    <dbReference type="NCBI Taxonomy" id="351160"/>
    <lineage>
        <taxon>Archaea</taxon>
        <taxon>Methanobacteriati</taxon>
        <taxon>Methanobacteriota</taxon>
        <taxon>Stenosarchaea group</taxon>
        <taxon>Methanomicrobia</taxon>
        <taxon>Methanocellales</taxon>
        <taxon>Methanocellaceae</taxon>
        <taxon>Methanocella</taxon>
    </lineage>
</organism>
<name>RL14_METAR</name>
<comment type="function">
    <text evidence="1">Binds to 23S rRNA. Forms part of two intersubunit bridges in the 70S ribosome.</text>
</comment>
<comment type="subunit">
    <text evidence="1">Part of the 50S ribosomal subunit. Forms a cluster with proteins L3 and L24e, part of which may contact the 16S rRNA in 2 intersubunit bridges.</text>
</comment>
<comment type="similarity">
    <text evidence="1">Belongs to the universal ribosomal protein uL14 family.</text>
</comment>
<dbReference type="EMBL" id="AM114193">
    <property type="protein sequence ID" value="CAJ37615.1"/>
    <property type="molecule type" value="Genomic_DNA"/>
</dbReference>
<dbReference type="RefSeq" id="WP_012034970.1">
    <property type="nucleotide sequence ID" value="NC_009464.1"/>
</dbReference>
<dbReference type="SMR" id="Q0W1X8"/>
<dbReference type="STRING" id="351160.RCIX2554"/>
<dbReference type="GeneID" id="5144352"/>
<dbReference type="KEGG" id="rci:RCIX2554"/>
<dbReference type="PATRIC" id="fig|351160.9.peg.668"/>
<dbReference type="eggNOG" id="arCOG04095">
    <property type="taxonomic scope" value="Archaea"/>
</dbReference>
<dbReference type="OrthoDB" id="23569at2157"/>
<dbReference type="Proteomes" id="UP000000663">
    <property type="component" value="Chromosome"/>
</dbReference>
<dbReference type="GO" id="GO:0022625">
    <property type="term" value="C:cytosolic large ribosomal subunit"/>
    <property type="evidence" value="ECO:0007669"/>
    <property type="project" value="TreeGrafter"/>
</dbReference>
<dbReference type="GO" id="GO:0070180">
    <property type="term" value="F:large ribosomal subunit rRNA binding"/>
    <property type="evidence" value="ECO:0007669"/>
    <property type="project" value="TreeGrafter"/>
</dbReference>
<dbReference type="GO" id="GO:0003735">
    <property type="term" value="F:structural constituent of ribosome"/>
    <property type="evidence" value="ECO:0007669"/>
    <property type="project" value="InterPro"/>
</dbReference>
<dbReference type="GO" id="GO:0006412">
    <property type="term" value="P:translation"/>
    <property type="evidence" value="ECO:0007669"/>
    <property type="project" value="UniProtKB-UniRule"/>
</dbReference>
<dbReference type="CDD" id="cd00337">
    <property type="entry name" value="Ribosomal_uL14"/>
    <property type="match status" value="1"/>
</dbReference>
<dbReference type="FunFam" id="2.40.150.20:FF:000007">
    <property type="entry name" value="50S ribosomal protein L14"/>
    <property type="match status" value="1"/>
</dbReference>
<dbReference type="Gene3D" id="2.40.150.20">
    <property type="entry name" value="Ribosomal protein L14"/>
    <property type="match status" value="1"/>
</dbReference>
<dbReference type="HAMAP" id="MF_01367">
    <property type="entry name" value="Ribosomal_uL14"/>
    <property type="match status" value="1"/>
</dbReference>
<dbReference type="InterPro" id="IPR000218">
    <property type="entry name" value="Ribosomal_uL14"/>
</dbReference>
<dbReference type="InterPro" id="IPR019971">
    <property type="entry name" value="Ribosomal_uL14_arc"/>
</dbReference>
<dbReference type="InterPro" id="IPR036853">
    <property type="entry name" value="Ribosomal_uL14_sf"/>
</dbReference>
<dbReference type="NCBIfam" id="NF006344">
    <property type="entry name" value="PRK08571.1"/>
    <property type="match status" value="1"/>
</dbReference>
<dbReference type="NCBIfam" id="TIGR03673">
    <property type="entry name" value="uL14_arch"/>
    <property type="match status" value="1"/>
</dbReference>
<dbReference type="PANTHER" id="PTHR11761">
    <property type="entry name" value="50S/60S RIBOSOMAL PROTEIN L14/L23"/>
    <property type="match status" value="1"/>
</dbReference>
<dbReference type="PANTHER" id="PTHR11761:SF8">
    <property type="entry name" value="LARGE RIBOSOMAL SUBUNIT PROTEIN UL14"/>
    <property type="match status" value="1"/>
</dbReference>
<dbReference type="Pfam" id="PF00238">
    <property type="entry name" value="Ribosomal_L14"/>
    <property type="match status" value="1"/>
</dbReference>
<dbReference type="SMART" id="SM01374">
    <property type="entry name" value="Ribosomal_L14"/>
    <property type="match status" value="1"/>
</dbReference>
<dbReference type="SUPFAM" id="SSF50193">
    <property type="entry name" value="Ribosomal protein L14"/>
    <property type="match status" value="1"/>
</dbReference>
<gene>
    <name evidence="1" type="primary">rpl14</name>
    <name type="ordered locus">UNCMA_06410</name>
    <name type="ORF">RCIX2554</name>
</gene>
<keyword id="KW-1185">Reference proteome</keyword>
<keyword id="KW-0687">Ribonucleoprotein</keyword>
<keyword id="KW-0689">Ribosomal protein</keyword>
<keyword id="KW-0694">RNA-binding</keyword>
<keyword id="KW-0699">rRNA-binding</keyword>
<feature type="chain" id="PRO_0000355854" description="Large ribosomal subunit protein uL14">
    <location>
        <begin position="1"/>
        <end position="132"/>
    </location>
</feature>
<protein>
    <recommendedName>
        <fullName evidence="1">Large ribosomal subunit protein uL14</fullName>
    </recommendedName>
    <alternativeName>
        <fullName evidence="2">50S ribosomal protein L14</fullName>
    </alternativeName>
</protein>
<reference key="1">
    <citation type="journal article" date="2006" name="Science">
        <title>Genome of rice cluster I archaea -- the key methane producers in the rice rhizosphere.</title>
        <authorList>
            <person name="Erkel C."/>
            <person name="Kube M."/>
            <person name="Reinhardt R."/>
            <person name="Liesack W."/>
        </authorList>
    </citation>
    <scope>NUCLEOTIDE SEQUENCE [LARGE SCALE GENOMIC DNA]</scope>
    <source>
        <strain>DSM 22066 / NBRC 105507 / MRE50</strain>
    </source>
</reference>
<proteinExistence type="inferred from homology"/>
<sequence>MRAIKAKIPRSVHTATRLEVADNTGARLVEVISVLKYRGRKNRMPKAGIGDIFIGSVKKGTPEMRKTIVRCVVIRQKKEYRRPSGLRVSFEDNACVLVDDNNDPKGTEIKGPVAREVAERYAKIGSTATIIV</sequence>